<evidence type="ECO:0000255" key="1">
    <source>
        <dbReference type="HAMAP-Rule" id="MF_01077"/>
    </source>
</evidence>
<proteinExistence type="inferred from homology"/>
<organism>
    <name type="scientific">Halothermothrix orenii (strain H 168 / OCM 544 / DSM 9562)</name>
    <dbReference type="NCBI Taxonomy" id="373903"/>
    <lineage>
        <taxon>Bacteria</taxon>
        <taxon>Bacillati</taxon>
        <taxon>Bacillota</taxon>
        <taxon>Clostridia</taxon>
        <taxon>Halanaerobiales</taxon>
        <taxon>Halothermotrichaceae</taxon>
        <taxon>Halothermothrix</taxon>
    </lineage>
</organism>
<name>RIMP_HALOH</name>
<keyword id="KW-0963">Cytoplasm</keyword>
<keyword id="KW-1185">Reference proteome</keyword>
<keyword id="KW-0690">Ribosome biogenesis</keyword>
<sequence length="159" mass="17932">MGKITDRVEDLAQPIVESQGLELVDVEYVKEGENRVLRVFIENPEGEVTLDHCENVSKNLDEKLDEVDPIQESYILEVSSPGIERPLKKKEDFDRFSGKLAYIKTFAPVSGNKEITGIIKGRDGDNIKVLKKDDDKELEIPFSQIAKAHLMVDFDNITG</sequence>
<protein>
    <recommendedName>
        <fullName evidence="1">Ribosome maturation factor RimP</fullName>
    </recommendedName>
</protein>
<comment type="function">
    <text evidence="1">Required for maturation of 30S ribosomal subunits.</text>
</comment>
<comment type="subcellular location">
    <subcellularLocation>
        <location evidence="1">Cytoplasm</location>
    </subcellularLocation>
</comment>
<comment type="similarity">
    <text evidence="1">Belongs to the RimP family.</text>
</comment>
<accession>B8CW69</accession>
<reference key="1">
    <citation type="journal article" date="2009" name="PLoS ONE">
        <title>Genome analysis of the anaerobic thermohalophilic bacterium Halothermothrix orenii.</title>
        <authorList>
            <person name="Mavromatis K."/>
            <person name="Ivanova N."/>
            <person name="Anderson I."/>
            <person name="Lykidis A."/>
            <person name="Hooper S.D."/>
            <person name="Sun H."/>
            <person name="Kunin V."/>
            <person name="Lapidus A."/>
            <person name="Hugenholtz P."/>
            <person name="Patel B."/>
            <person name="Kyrpides N.C."/>
        </authorList>
    </citation>
    <scope>NUCLEOTIDE SEQUENCE [LARGE SCALE GENOMIC DNA]</scope>
    <source>
        <strain>H 168 / OCM 544 / DSM 9562</strain>
    </source>
</reference>
<feature type="chain" id="PRO_0000384679" description="Ribosome maturation factor RimP">
    <location>
        <begin position="1"/>
        <end position="159"/>
    </location>
</feature>
<gene>
    <name evidence="1" type="primary">rimP</name>
    <name type="ordered locus">Hore_07810</name>
</gene>
<dbReference type="EMBL" id="CP001098">
    <property type="protein sequence ID" value="ACL69538.1"/>
    <property type="molecule type" value="Genomic_DNA"/>
</dbReference>
<dbReference type="RefSeq" id="WP_012635726.1">
    <property type="nucleotide sequence ID" value="NC_011899.1"/>
</dbReference>
<dbReference type="SMR" id="B8CW69"/>
<dbReference type="STRING" id="373903.Hore_07810"/>
<dbReference type="KEGG" id="hor:Hore_07810"/>
<dbReference type="eggNOG" id="COG0779">
    <property type="taxonomic scope" value="Bacteria"/>
</dbReference>
<dbReference type="HOGENOM" id="CLU_070525_2_2_9"/>
<dbReference type="OrthoDB" id="9805006at2"/>
<dbReference type="Proteomes" id="UP000000719">
    <property type="component" value="Chromosome"/>
</dbReference>
<dbReference type="GO" id="GO:0005829">
    <property type="term" value="C:cytosol"/>
    <property type="evidence" value="ECO:0007669"/>
    <property type="project" value="TreeGrafter"/>
</dbReference>
<dbReference type="GO" id="GO:0000028">
    <property type="term" value="P:ribosomal small subunit assembly"/>
    <property type="evidence" value="ECO:0007669"/>
    <property type="project" value="TreeGrafter"/>
</dbReference>
<dbReference type="GO" id="GO:0006412">
    <property type="term" value="P:translation"/>
    <property type="evidence" value="ECO:0007669"/>
    <property type="project" value="TreeGrafter"/>
</dbReference>
<dbReference type="CDD" id="cd01734">
    <property type="entry name" value="YlxS_C"/>
    <property type="match status" value="1"/>
</dbReference>
<dbReference type="FunFam" id="3.30.300.70:FF:000001">
    <property type="entry name" value="Ribosome maturation factor RimP"/>
    <property type="match status" value="1"/>
</dbReference>
<dbReference type="Gene3D" id="2.30.30.180">
    <property type="entry name" value="Ribosome maturation factor RimP, C-terminal domain"/>
    <property type="match status" value="1"/>
</dbReference>
<dbReference type="Gene3D" id="3.30.300.70">
    <property type="entry name" value="RimP-like superfamily, N-terminal"/>
    <property type="match status" value="1"/>
</dbReference>
<dbReference type="HAMAP" id="MF_01077">
    <property type="entry name" value="RimP"/>
    <property type="match status" value="1"/>
</dbReference>
<dbReference type="InterPro" id="IPR003728">
    <property type="entry name" value="Ribosome_maturation_RimP"/>
</dbReference>
<dbReference type="InterPro" id="IPR028998">
    <property type="entry name" value="RimP_C"/>
</dbReference>
<dbReference type="InterPro" id="IPR036847">
    <property type="entry name" value="RimP_C_sf"/>
</dbReference>
<dbReference type="InterPro" id="IPR028989">
    <property type="entry name" value="RimP_N"/>
</dbReference>
<dbReference type="InterPro" id="IPR035956">
    <property type="entry name" value="RimP_N_sf"/>
</dbReference>
<dbReference type="PANTHER" id="PTHR33867">
    <property type="entry name" value="RIBOSOME MATURATION FACTOR RIMP"/>
    <property type="match status" value="1"/>
</dbReference>
<dbReference type="PANTHER" id="PTHR33867:SF1">
    <property type="entry name" value="RIBOSOME MATURATION FACTOR RIMP"/>
    <property type="match status" value="1"/>
</dbReference>
<dbReference type="Pfam" id="PF17384">
    <property type="entry name" value="DUF150_C"/>
    <property type="match status" value="1"/>
</dbReference>
<dbReference type="Pfam" id="PF02576">
    <property type="entry name" value="RimP_N"/>
    <property type="match status" value="1"/>
</dbReference>
<dbReference type="SUPFAM" id="SSF74942">
    <property type="entry name" value="YhbC-like, C-terminal domain"/>
    <property type="match status" value="1"/>
</dbReference>
<dbReference type="SUPFAM" id="SSF75420">
    <property type="entry name" value="YhbC-like, N-terminal domain"/>
    <property type="match status" value="1"/>
</dbReference>